<comment type="function">
    <text evidence="1">Catalyzes the attachment of L-aspartate to tRNA(Asp) in a two-step reaction: L-aspartate is first activated by ATP to form Asp-AMP and then transferred to the acceptor end of tRNA(Asp).</text>
</comment>
<comment type="catalytic activity">
    <reaction evidence="1">
        <text>tRNA(Asp) + L-aspartate + ATP = L-aspartyl-tRNA(Asp) + AMP + diphosphate</text>
        <dbReference type="Rhea" id="RHEA:19649"/>
        <dbReference type="Rhea" id="RHEA-COMP:9660"/>
        <dbReference type="Rhea" id="RHEA-COMP:9678"/>
        <dbReference type="ChEBI" id="CHEBI:29991"/>
        <dbReference type="ChEBI" id="CHEBI:30616"/>
        <dbReference type="ChEBI" id="CHEBI:33019"/>
        <dbReference type="ChEBI" id="CHEBI:78442"/>
        <dbReference type="ChEBI" id="CHEBI:78516"/>
        <dbReference type="ChEBI" id="CHEBI:456215"/>
        <dbReference type="EC" id="6.1.1.12"/>
    </reaction>
</comment>
<comment type="subunit">
    <text evidence="1">Homodimer.</text>
</comment>
<comment type="subcellular location">
    <subcellularLocation>
        <location evidence="1">Cytoplasm</location>
    </subcellularLocation>
</comment>
<comment type="similarity">
    <text evidence="1">Belongs to the class-II aminoacyl-tRNA synthetase family. Type 1 subfamily.</text>
</comment>
<sequence>MRTHFCGLVDETLIGQTVTLAGWTDVARNLGGVCFIDLRDHEGIVQVTVEPAEGDANSAEVFKVAASLGYEDVLQVEGVVRARHAVNDKIRTGKVEVIATRITILNKAAPLPFHAHENPGEDTRLKYRYLDLRRPEMQRMQRTRIKLVQALRRHLDARDFQDIETPILTKATPEGARDFLVPARMHPGEFYALPQSPQLFKQILMVAGFDRYYQIARCFRDEALRADRQLEFTQLDMEFAFVRERDVQDFVEDMIRAIFKEVVDVELAAQFPRMTWAEAMRRYGSDKPDLRIALELVDVAELVKTSEFPVFAAAANDADGRVAALRIPGGATLSRKQIDDYAAHAAKYGAKGLAYSKLSETGEVSSPIAKFFGEEAFAALLAHVGAANGDIVFFGAGSYNKVSDFMGALRLKAGKDFGLVAAGWAPLWVTDFPMFEWDEEAQRYVALHHPFTAPAVDDIADLRANARTAVSRGYDMVLNGNEIGGGSIRIHRPDMQSAVFELLGIGAEEARAKFGFLLDALNYGAPPHGGIAFGIDRIAALMAGTESIRDVIPFPKTTGAQDLMTDAPSPIAAEQLAEVHVQVRPKQA</sequence>
<keyword id="KW-0030">Aminoacyl-tRNA synthetase</keyword>
<keyword id="KW-0067">ATP-binding</keyword>
<keyword id="KW-0963">Cytoplasm</keyword>
<keyword id="KW-0436">Ligase</keyword>
<keyword id="KW-0547">Nucleotide-binding</keyword>
<keyword id="KW-0648">Protein biosynthesis</keyword>
<reference key="1">
    <citation type="journal article" date="2005" name="Genome Res.">
        <title>Comparative and functional genomic analyses of the pathogenicity of phytopathogen Xanthomonas campestris pv. campestris.</title>
        <authorList>
            <person name="Qian W."/>
            <person name="Jia Y."/>
            <person name="Ren S.-X."/>
            <person name="He Y.-Q."/>
            <person name="Feng J.-X."/>
            <person name="Lu L.-F."/>
            <person name="Sun Q."/>
            <person name="Ying G."/>
            <person name="Tang D.-J."/>
            <person name="Tang H."/>
            <person name="Wu W."/>
            <person name="Hao P."/>
            <person name="Wang L."/>
            <person name="Jiang B.-L."/>
            <person name="Zeng S."/>
            <person name="Gu W.-Y."/>
            <person name="Lu G."/>
            <person name="Rong L."/>
            <person name="Tian Y."/>
            <person name="Yao Z."/>
            <person name="Fu G."/>
            <person name="Chen B."/>
            <person name="Fang R."/>
            <person name="Qiang B."/>
            <person name="Chen Z."/>
            <person name="Zhao G.-P."/>
            <person name="Tang J.-L."/>
            <person name="He C."/>
        </authorList>
    </citation>
    <scope>NUCLEOTIDE SEQUENCE [LARGE SCALE GENOMIC DNA]</scope>
    <source>
        <strain>8004</strain>
    </source>
</reference>
<name>SYD_XANC8</name>
<organism>
    <name type="scientific">Xanthomonas campestris pv. campestris (strain 8004)</name>
    <dbReference type="NCBI Taxonomy" id="314565"/>
    <lineage>
        <taxon>Bacteria</taxon>
        <taxon>Pseudomonadati</taxon>
        <taxon>Pseudomonadota</taxon>
        <taxon>Gammaproteobacteria</taxon>
        <taxon>Lysobacterales</taxon>
        <taxon>Lysobacteraceae</taxon>
        <taxon>Xanthomonas</taxon>
    </lineage>
</organism>
<dbReference type="EC" id="6.1.1.12" evidence="1"/>
<dbReference type="EMBL" id="CP000050">
    <property type="protein sequence ID" value="AAY48198.1"/>
    <property type="molecule type" value="Genomic_DNA"/>
</dbReference>
<dbReference type="RefSeq" id="WP_011038145.1">
    <property type="nucleotide sequence ID" value="NZ_CP155948.1"/>
</dbReference>
<dbReference type="SMR" id="Q4UXM5"/>
<dbReference type="KEGG" id="xcb:XC_1128"/>
<dbReference type="HOGENOM" id="CLU_014330_3_2_6"/>
<dbReference type="Proteomes" id="UP000000420">
    <property type="component" value="Chromosome"/>
</dbReference>
<dbReference type="GO" id="GO:0005737">
    <property type="term" value="C:cytoplasm"/>
    <property type="evidence" value="ECO:0007669"/>
    <property type="project" value="UniProtKB-SubCell"/>
</dbReference>
<dbReference type="GO" id="GO:0004815">
    <property type="term" value="F:aspartate-tRNA ligase activity"/>
    <property type="evidence" value="ECO:0007669"/>
    <property type="project" value="UniProtKB-UniRule"/>
</dbReference>
<dbReference type="GO" id="GO:0005524">
    <property type="term" value="F:ATP binding"/>
    <property type="evidence" value="ECO:0007669"/>
    <property type="project" value="UniProtKB-UniRule"/>
</dbReference>
<dbReference type="GO" id="GO:0003676">
    <property type="term" value="F:nucleic acid binding"/>
    <property type="evidence" value="ECO:0007669"/>
    <property type="project" value="InterPro"/>
</dbReference>
<dbReference type="GO" id="GO:0006422">
    <property type="term" value="P:aspartyl-tRNA aminoacylation"/>
    <property type="evidence" value="ECO:0007669"/>
    <property type="project" value="UniProtKB-UniRule"/>
</dbReference>
<dbReference type="CDD" id="cd00777">
    <property type="entry name" value="AspRS_core"/>
    <property type="match status" value="1"/>
</dbReference>
<dbReference type="CDD" id="cd04317">
    <property type="entry name" value="EcAspRS_like_N"/>
    <property type="match status" value="1"/>
</dbReference>
<dbReference type="Gene3D" id="3.30.930.10">
    <property type="entry name" value="Bira Bifunctional Protein, Domain 2"/>
    <property type="match status" value="1"/>
</dbReference>
<dbReference type="Gene3D" id="3.30.1360.30">
    <property type="entry name" value="GAD-like domain"/>
    <property type="match status" value="1"/>
</dbReference>
<dbReference type="Gene3D" id="2.40.50.140">
    <property type="entry name" value="Nucleic acid-binding proteins"/>
    <property type="match status" value="1"/>
</dbReference>
<dbReference type="HAMAP" id="MF_00044">
    <property type="entry name" value="Asp_tRNA_synth_type1"/>
    <property type="match status" value="1"/>
</dbReference>
<dbReference type="InterPro" id="IPR004364">
    <property type="entry name" value="Aa-tRNA-synt_II"/>
</dbReference>
<dbReference type="InterPro" id="IPR006195">
    <property type="entry name" value="aa-tRNA-synth_II"/>
</dbReference>
<dbReference type="InterPro" id="IPR045864">
    <property type="entry name" value="aa-tRNA-synth_II/BPL/LPL"/>
</dbReference>
<dbReference type="InterPro" id="IPR004524">
    <property type="entry name" value="Asp-tRNA-ligase_1"/>
</dbReference>
<dbReference type="InterPro" id="IPR047089">
    <property type="entry name" value="Asp-tRNA-ligase_1_N"/>
</dbReference>
<dbReference type="InterPro" id="IPR002312">
    <property type="entry name" value="Asp/Asn-tRNA-synth_IIb"/>
</dbReference>
<dbReference type="InterPro" id="IPR047090">
    <property type="entry name" value="AspRS_core"/>
</dbReference>
<dbReference type="InterPro" id="IPR004115">
    <property type="entry name" value="GAD-like_sf"/>
</dbReference>
<dbReference type="InterPro" id="IPR029351">
    <property type="entry name" value="GAD_dom"/>
</dbReference>
<dbReference type="InterPro" id="IPR012340">
    <property type="entry name" value="NA-bd_OB-fold"/>
</dbReference>
<dbReference type="InterPro" id="IPR004365">
    <property type="entry name" value="NA-bd_OB_tRNA"/>
</dbReference>
<dbReference type="NCBIfam" id="TIGR00459">
    <property type="entry name" value="aspS_bact"/>
    <property type="match status" value="1"/>
</dbReference>
<dbReference type="NCBIfam" id="NF001750">
    <property type="entry name" value="PRK00476.1"/>
    <property type="match status" value="1"/>
</dbReference>
<dbReference type="PANTHER" id="PTHR22594:SF5">
    <property type="entry name" value="ASPARTATE--TRNA LIGASE, MITOCHONDRIAL"/>
    <property type="match status" value="1"/>
</dbReference>
<dbReference type="PANTHER" id="PTHR22594">
    <property type="entry name" value="ASPARTYL/LYSYL-TRNA SYNTHETASE"/>
    <property type="match status" value="1"/>
</dbReference>
<dbReference type="Pfam" id="PF02938">
    <property type="entry name" value="GAD"/>
    <property type="match status" value="1"/>
</dbReference>
<dbReference type="Pfam" id="PF00152">
    <property type="entry name" value="tRNA-synt_2"/>
    <property type="match status" value="1"/>
</dbReference>
<dbReference type="Pfam" id="PF01336">
    <property type="entry name" value="tRNA_anti-codon"/>
    <property type="match status" value="1"/>
</dbReference>
<dbReference type="PRINTS" id="PR01042">
    <property type="entry name" value="TRNASYNTHASP"/>
</dbReference>
<dbReference type="SUPFAM" id="SSF55681">
    <property type="entry name" value="Class II aaRS and biotin synthetases"/>
    <property type="match status" value="1"/>
</dbReference>
<dbReference type="SUPFAM" id="SSF55261">
    <property type="entry name" value="GAD domain-like"/>
    <property type="match status" value="1"/>
</dbReference>
<dbReference type="SUPFAM" id="SSF50249">
    <property type="entry name" value="Nucleic acid-binding proteins"/>
    <property type="match status" value="1"/>
</dbReference>
<dbReference type="PROSITE" id="PS50862">
    <property type="entry name" value="AA_TRNA_LIGASE_II"/>
    <property type="match status" value="1"/>
</dbReference>
<gene>
    <name evidence="1" type="primary">aspS</name>
    <name type="ordered locus">XC_1128</name>
</gene>
<feature type="chain" id="PRO_0000235579" description="Aspartate--tRNA ligase">
    <location>
        <begin position="1"/>
        <end position="588"/>
    </location>
</feature>
<feature type="region of interest" description="Aspartate" evidence="1">
    <location>
        <begin position="198"/>
        <end position="201"/>
    </location>
</feature>
<feature type="binding site" evidence="1">
    <location>
        <position position="174"/>
    </location>
    <ligand>
        <name>L-aspartate</name>
        <dbReference type="ChEBI" id="CHEBI:29991"/>
    </ligand>
</feature>
<feature type="binding site" evidence="1">
    <location>
        <begin position="220"/>
        <end position="222"/>
    </location>
    <ligand>
        <name>ATP</name>
        <dbReference type="ChEBI" id="CHEBI:30616"/>
    </ligand>
</feature>
<feature type="binding site" evidence="1">
    <location>
        <position position="220"/>
    </location>
    <ligand>
        <name>L-aspartate</name>
        <dbReference type="ChEBI" id="CHEBI:29991"/>
    </ligand>
</feature>
<feature type="binding site" evidence="1">
    <location>
        <position position="229"/>
    </location>
    <ligand>
        <name>ATP</name>
        <dbReference type="ChEBI" id="CHEBI:30616"/>
    </ligand>
</feature>
<feature type="binding site" evidence="1">
    <location>
        <position position="448"/>
    </location>
    <ligand>
        <name>L-aspartate</name>
        <dbReference type="ChEBI" id="CHEBI:29991"/>
    </ligand>
</feature>
<feature type="binding site" evidence="1">
    <location>
        <position position="482"/>
    </location>
    <ligand>
        <name>ATP</name>
        <dbReference type="ChEBI" id="CHEBI:30616"/>
    </ligand>
</feature>
<feature type="binding site" evidence="1">
    <location>
        <position position="489"/>
    </location>
    <ligand>
        <name>L-aspartate</name>
        <dbReference type="ChEBI" id="CHEBI:29991"/>
    </ligand>
</feature>
<feature type="binding site" evidence="1">
    <location>
        <begin position="534"/>
        <end position="537"/>
    </location>
    <ligand>
        <name>ATP</name>
        <dbReference type="ChEBI" id="CHEBI:30616"/>
    </ligand>
</feature>
<protein>
    <recommendedName>
        <fullName evidence="1">Aspartate--tRNA ligase</fullName>
        <ecNumber evidence="1">6.1.1.12</ecNumber>
    </recommendedName>
    <alternativeName>
        <fullName evidence="1">Aspartyl-tRNA synthetase</fullName>
        <shortName evidence="1">AspRS</shortName>
    </alternativeName>
</protein>
<proteinExistence type="inferred from homology"/>
<evidence type="ECO:0000255" key="1">
    <source>
        <dbReference type="HAMAP-Rule" id="MF_00044"/>
    </source>
</evidence>
<accession>Q4UXM5</accession>